<feature type="chain" id="PRO_0000083277" description="RNA-directed RNA polymerase 2a">
    <location>
        <begin position="1"/>
        <end position="857"/>
    </location>
</feature>
<feature type="domain" description="RdRp catalytic" evidence="2">
    <location>
        <begin position="511"/>
        <end position="624"/>
    </location>
</feature>
<feature type="region of interest" description="Disordered" evidence="3">
    <location>
        <begin position="782"/>
        <end position="829"/>
    </location>
</feature>
<feature type="compositionally biased region" description="Polar residues" evidence="3">
    <location>
        <begin position="804"/>
        <end position="816"/>
    </location>
</feature>
<comment type="function">
    <text evidence="4">RNA-dependent RNA polymerase which replicates the viral genome composed of 3 RNA segments, RNA1, RNA2 and RNA3.</text>
</comment>
<comment type="catalytic activity">
    <reaction evidence="2">
        <text>RNA(n) + a ribonucleoside 5'-triphosphate = RNA(n+1) + diphosphate</text>
        <dbReference type="Rhea" id="RHEA:21248"/>
        <dbReference type="Rhea" id="RHEA-COMP:14527"/>
        <dbReference type="Rhea" id="RHEA-COMP:17342"/>
        <dbReference type="ChEBI" id="CHEBI:33019"/>
        <dbReference type="ChEBI" id="CHEBI:61557"/>
        <dbReference type="ChEBI" id="CHEBI:140395"/>
        <dbReference type="EC" id="2.7.7.48"/>
    </reaction>
</comment>
<comment type="subunit">
    <text evidence="1">Interacts with replication protein 1a.</text>
</comment>
<comment type="similarity">
    <text evidence="4">Belongs to the ssRNA positive-strand viruses RNA-directed RNA polymerase family.</text>
</comment>
<organismHost>
    <name type="scientific">Cucumis sativus</name>
    <name type="common">Cucumber</name>
    <dbReference type="NCBI Taxonomy" id="3659"/>
</organismHost>
<organismHost>
    <name type="scientific">Solanum lycopersicum</name>
    <name type="common">Tomato</name>
    <name type="synonym">Lycopersicon esculentum</name>
    <dbReference type="NCBI Taxonomy" id="4081"/>
</organismHost>
<organismHost>
    <name type="scientific">Spinacia oleracea</name>
    <name type="common">Spinach</name>
    <dbReference type="NCBI Taxonomy" id="3562"/>
</organismHost>
<protein>
    <recommendedName>
        <fullName>RNA-directed RNA polymerase 2a</fullName>
        <shortName>protein 2a</shortName>
        <ecNumber>2.7.7.48</ecNumber>
    </recommendedName>
</protein>
<name>RDRP_CMVKO</name>
<evidence type="ECO:0000250" key="1"/>
<evidence type="ECO:0000255" key="2">
    <source>
        <dbReference type="PROSITE-ProRule" id="PRU00539"/>
    </source>
</evidence>
<evidence type="ECO:0000256" key="3">
    <source>
        <dbReference type="SAM" id="MobiDB-lite"/>
    </source>
</evidence>
<evidence type="ECO:0000305" key="4"/>
<gene>
    <name type="ORF">ORF2a</name>
</gene>
<accession>Q96711</accession>
<dbReference type="EC" id="2.7.7.48"/>
<dbReference type="EMBL" id="U66287">
    <property type="protein sequence ID" value="AAB07139.1"/>
    <property type="molecule type" value="Genomic_RNA"/>
</dbReference>
<dbReference type="GO" id="GO:0000166">
    <property type="term" value="F:nucleotide binding"/>
    <property type="evidence" value="ECO:0007669"/>
    <property type="project" value="UniProtKB-KW"/>
</dbReference>
<dbReference type="GO" id="GO:0003723">
    <property type="term" value="F:RNA binding"/>
    <property type="evidence" value="ECO:0007669"/>
    <property type="project" value="InterPro"/>
</dbReference>
<dbReference type="GO" id="GO:0003968">
    <property type="term" value="F:RNA-directed RNA polymerase activity"/>
    <property type="evidence" value="ECO:0007669"/>
    <property type="project" value="UniProtKB-KW"/>
</dbReference>
<dbReference type="GO" id="GO:0006351">
    <property type="term" value="P:DNA-templated transcription"/>
    <property type="evidence" value="ECO:0007669"/>
    <property type="project" value="InterPro"/>
</dbReference>
<dbReference type="GO" id="GO:0039690">
    <property type="term" value="P:positive stranded viral RNA replication"/>
    <property type="evidence" value="ECO:0007669"/>
    <property type="project" value="InterPro"/>
</dbReference>
<dbReference type="CDD" id="cd23252">
    <property type="entry name" value="Bromoviridae_RdRp"/>
    <property type="match status" value="1"/>
</dbReference>
<dbReference type="InterPro" id="IPR047309">
    <property type="entry name" value="Bromoviridae_RdRp"/>
</dbReference>
<dbReference type="InterPro" id="IPR043502">
    <property type="entry name" value="DNA/RNA_pol_sf"/>
</dbReference>
<dbReference type="InterPro" id="IPR001788">
    <property type="entry name" value="RNA-dep_RNA_pol_alsuvir"/>
</dbReference>
<dbReference type="InterPro" id="IPR007094">
    <property type="entry name" value="RNA-dir_pol_PSvirus"/>
</dbReference>
<dbReference type="Pfam" id="PF00978">
    <property type="entry name" value="RdRP_2"/>
    <property type="match status" value="1"/>
</dbReference>
<dbReference type="SUPFAM" id="SSF56672">
    <property type="entry name" value="DNA/RNA polymerases"/>
    <property type="match status" value="1"/>
</dbReference>
<dbReference type="PROSITE" id="PS50507">
    <property type="entry name" value="RDRP_SSRNA_POS"/>
    <property type="match status" value="1"/>
</dbReference>
<reference key="1">
    <citation type="journal article" date="1996" name="J. Plant Biol.">
        <title>Full-length cDNA cloning and nucleotide sequence analysis of cucumber mosaic virus (strain Kor) RNA2.</title>
        <authorList>
            <person name="Kwon C.S."/>
            <person name="Paek K.H."/>
            <person name="Chung W.I."/>
        </authorList>
    </citation>
    <scope>NUCLEOTIDE SEQUENCE [GENOMIC RNA]</scope>
</reference>
<sequence length="857" mass="96716">MASPAPAFSLANLLNGSYGVDTPEDVERLRSEQREEAAAACRNYRPLPAVDVSESVTEDAHSLRTPDGAPAEAVSDEFVTYGAEDYLEKSDDELLVAFETMVKPMRIGQLWCPAFNKCSFISSIAMARALLLAPRTSNRTMKCFEDLVAAIYTKSDFYYGEECEADDVQMDISSRDVPGYSFEPWSRTSGFEPPPICEACDMIMYQCPCFDFNALKKSCAERTFADDYVIEGLDGVVDNATLLSNLGPFLVPVKCQYENCPTPTLAIPPDLNRATDRVDINLVQSICDSTLPTHSNYDDSFHQVFVESADYSIDLDHVRLRQSDLIAKIPDSGHMIPVLNTGSGHKRVGTTKEVLTAIKKRNADVPELGDSVNLSRLSKAVAERFFISYINGNSLASSNFVNVVSNFHDYMEKWKSSGLSYDDLPDLHAENLQFYDHMIKSDVKPVVSDTLNIDRPVPATITYHKKSITSQFSPLFTALFERFQRCLRERIILPVGKISSLEMAGFDVKNKHCLEIDLSKFDKSQGEFHLLIQEHILNGLGCPAPITKWWCDFHRFSYIRDRRAGVGMPISFQRRTGDAFTYFGNTIVTMAEFAWCYDTDQFEKLLFSGDDSLGFSLLPPVGDPSKFTTLFNMEAKVMEPAVPYICSKFLLSDEFGNTFSVPDPLREVQRLGTKKIPYSDNDEFLFAHFMSFVDRLKFLDRMSQSCIDQLSIFFELKYKKSGEEAALMLGAFKKYTANFQSYKELYYSDRRQCELINSFCSTEFRVERVNSNKQRKKYGIERRCNDKRRTPTGSYGGGEEAETKISQAESTGTRSQKSQRESAFKSQTVPLPTVLSSRWFGTDRVEPPCERGGVTRA</sequence>
<keyword id="KW-0547">Nucleotide-binding</keyword>
<keyword id="KW-0548">Nucleotidyltransferase</keyword>
<keyword id="KW-0696">RNA-directed RNA polymerase</keyword>
<keyword id="KW-0808">Transferase</keyword>
<keyword id="KW-0693">Viral RNA replication</keyword>
<proteinExistence type="inferred from homology"/>
<organism>
    <name type="scientific">Cucumber mosaic virus (strain Kor)</name>
    <name type="common">CMV</name>
    <dbReference type="NCBI Taxonomy" id="117116"/>
    <lineage>
        <taxon>Viruses</taxon>
        <taxon>Riboviria</taxon>
        <taxon>Orthornavirae</taxon>
        <taxon>Kitrinoviricota</taxon>
        <taxon>Alsuviricetes</taxon>
        <taxon>Martellivirales</taxon>
        <taxon>Bromoviridae</taxon>
        <taxon>Cucumovirus</taxon>
        <taxon>Cucumber mosaic virus</taxon>
    </lineage>
</organism>